<comment type="function">
    <text evidence="2 3">A mycothiol (MSH, N-acetyl-cysteinyl-glucosaminyl-inositol) S-conjugate amidase, it recycles conjugated MSH to the N-acetyl cysteine conjugate and the MSH precursor. Involved in MSH-dependent detoxification of a number of alkylating agents and antibiotics. Activity is specific for the mycothiol moiety. Has a low but measurable deacetylation activity on GlcNAc-Ins (N-acetyl-glucosaminyl-inositol), and thus can also directly contribute to the production of MSH.</text>
</comment>
<comment type="catalytic activity">
    <reaction evidence="1 2 3">
        <text>mycothiol S-conjugate + H2O = an N-acetyl-L-cysteine-S-conjugate + 1D-myo-inositol 2-amino-2-deoxy-alpha-D-glucopyranoside</text>
        <dbReference type="Rhea" id="RHEA:36543"/>
        <dbReference type="ChEBI" id="CHEBI:15377"/>
        <dbReference type="ChEBI" id="CHEBI:58718"/>
        <dbReference type="ChEBI" id="CHEBI:58886"/>
        <dbReference type="ChEBI" id="CHEBI:59633"/>
        <dbReference type="EC" id="3.5.1.115"/>
    </reaction>
</comment>
<comment type="cofactor">
    <cofactor evidence="1 3">
        <name>Zn(2+)</name>
        <dbReference type="ChEBI" id="CHEBI:29105"/>
    </cofactor>
    <text evidence="1 3">Binds 1 Zn(2+) ion per subunit.</text>
</comment>
<comment type="activity regulation">
    <text evidence="3 4">Partially inhibited by MSH when MSmB is used as substrate. Competitively inhibited by the GlcNAc-cyclohexyl derivative 5-(4-chlorophenyl)-N-((2R,3R,4R,5S,6R)-2-(cyclohexylthio)-tetrahydro-4,5-dihydroxy-6-(hydroxymethyl)-2H-pyran-3-yl)furan-2-carboxamide, which also inhibits MshB.</text>
</comment>
<comment type="biophysicochemical properties">
    <kinetics>
        <KM evidence="3">160 uM for MSmB (a bimane derivative of MSH)</KM>
        <KM evidence="3">190 uM for RifS13 (reduced MSH S-conjugate of rifamycin S)</KM>
        <KM evidence="3">450 uM for RifS17 (oxidized MSH S-conjugate of rifamycin S)</KM>
        <KM evidence="3">650 uM for MS-cerulenin (cerulenin S-conjugate of MSH)</KM>
        <KM evidence="3">2000 uM for GlcNAc-Ins</KM>
        <text>at 50 mM HEPES, pH 7.5, 37 degrees Celsius, 50 mM NaCl.</text>
    </kinetics>
</comment>
<comment type="subunit">
    <text evidence="1">Monomer.</text>
</comment>
<comment type="biotechnology">
    <text evidence="4">MSH is a glutathione analog and is essential for this organism. As MSH does not exist in its host (human) enzymes that are required for its metabolism (such as this one) are potential therapeutic targets.</text>
</comment>
<comment type="similarity">
    <text evidence="1">Belongs to the MshB deacetylase family. Mca subfamily.</text>
</comment>
<gene>
    <name evidence="1" type="primary">mca</name>
    <name type="ordered locus">Rv1082</name>
</gene>
<protein>
    <recommendedName>
        <fullName evidence="1">Mycothiol S-conjugate amidase</fullName>
        <ecNumber evidence="1">3.5.1.115</ecNumber>
    </recommendedName>
</protein>
<organism>
    <name type="scientific">Mycobacterium tuberculosis (strain ATCC 25618 / H37Rv)</name>
    <dbReference type="NCBI Taxonomy" id="83332"/>
    <lineage>
        <taxon>Bacteria</taxon>
        <taxon>Bacillati</taxon>
        <taxon>Actinomycetota</taxon>
        <taxon>Actinomycetes</taxon>
        <taxon>Mycobacteriales</taxon>
        <taxon>Mycobacteriaceae</taxon>
        <taxon>Mycobacterium</taxon>
        <taxon>Mycobacterium tuberculosis complex</taxon>
    </lineage>
</organism>
<dbReference type="EC" id="3.5.1.115" evidence="1"/>
<dbReference type="EMBL" id="AL123456">
    <property type="protein sequence ID" value="CCP43833.1"/>
    <property type="molecule type" value="Genomic_DNA"/>
</dbReference>
<dbReference type="PIR" id="H70894">
    <property type="entry name" value="H70894"/>
</dbReference>
<dbReference type="RefSeq" id="NP_215598.1">
    <property type="nucleotide sequence ID" value="NC_000962.3"/>
</dbReference>
<dbReference type="RefSeq" id="WP_003405746.1">
    <property type="nucleotide sequence ID" value="NZ_NVQJ01000080.1"/>
</dbReference>
<dbReference type="SMR" id="P9WJN1"/>
<dbReference type="FunCoup" id="P9WJN1">
    <property type="interactions" value="1"/>
</dbReference>
<dbReference type="STRING" id="83332.Rv1082"/>
<dbReference type="BindingDB" id="P9WJN1"/>
<dbReference type="ChEMBL" id="CHEMBL3703"/>
<dbReference type="PaxDb" id="83332-Rv1082"/>
<dbReference type="DNASU" id="887101"/>
<dbReference type="GeneID" id="45425055"/>
<dbReference type="GeneID" id="887101"/>
<dbReference type="KEGG" id="mtu:Rv1082"/>
<dbReference type="KEGG" id="mtv:RVBD_1082"/>
<dbReference type="TubercuList" id="Rv1082"/>
<dbReference type="eggNOG" id="COG2120">
    <property type="taxonomic scope" value="Bacteria"/>
</dbReference>
<dbReference type="InParanoid" id="P9WJN1"/>
<dbReference type="OrthoDB" id="158614at2"/>
<dbReference type="PhylomeDB" id="P9WJN1"/>
<dbReference type="BioCyc" id="MetaCyc:G185E-5244-MONOMER"/>
<dbReference type="BRENDA" id="3.5.1.115">
    <property type="organism ID" value="3445"/>
</dbReference>
<dbReference type="Reactome" id="R-MTU-879235">
    <property type="pathway name" value="Mycothiol-dependent detoxification"/>
</dbReference>
<dbReference type="Reactome" id="R-MTU-879299">
    <property type="pathway name" value="Mycothiol biosynthesis"/>
</dbReference>
<dbReference type="Reactome" id="R-MTU-879325">
    <property type="pathway name" value="Mycothiol catabolism"/>
</dbReference>
<dbReference type="Proteomes" id="UP000001584">
    <property type="component" value="Chromosome"/>
</dbReference>
<dbReference type="GO" id="GO:0005829">
    <property type="term" value="C:cytosol"/>
    <property type="evidence" value="ECO:0000304"/>
    <property type="project" value="Reactome"/>
</dbReference>
<dbReference type="GO" id="GO:0005886">
    <property type="term" value="C:plasma membrane"/>
    <property type="evidence" value="ECO:0007005"/>
    <property type="project" value="MTBBASE"/>
</dbReference>
<dbReference type="GO" id="GO:0016810">
    <property type="term" value="F:hydrolase activity, acting on carbon-nitrogen (but not peptide) bonds"/>
    <property type="evidence" value="ECO:0000314"/>
    <property type="project" value="MTBBASE"/>
</dbReference>
<dbReference type="GO" id="GO:0016811">
    <property type="term" value="F:hydrolase activity, acting on carbon-nitrogen (but not peptide) bonds, in linear amides"/>
    <property type="evidence" value="ECO:0000314"/>
    <property type="project" value="MTBBASE"/>
</dbReference>
<dbReference type="GO" id="GO:0008270">
    <property type="term" value="F:zinc ion binding"/>
    <property type="evidence" value="ECO:0000314"/>
    <property type="project" value="UniProtKB"/>
</dbReference>
<dbReference type="GO" id="GO:0010125">
    <property type="term" value="P:mycothiol biosynthetic process"/>
    <property type="evidence" value="ECO:0000314"/>
    <property type="project" value="MTBBASE"/>
</dbReference>
<dbReference type="GO" id="GO:0010126">
    <property type="term" value="P:mycothiol metabolic process"/>
    <property type="evidence" value="ECO:0000314"/>
    <property type="project" value="UniProtKB"/>
</dbReference>
<dbReference type="GO" id="GO:0010127">
    <property type="term" value="P:mycothiol-dependent detoxification"/>
    <property type="evidence" value="ECO:0000314"/>
    <property type="project" value="UniProtKB"/>
</dbReference>
<dbReference type="GO" id="GO:0052167">
    <property type="term" value="P:symbiont-mediated perturbation of host innate immune response"/>
    <property type="evidence" value="ECO:0000314"/>
    <property type="project" value="MTBBASE"/>
</dbReference>
<dbReference type="FunFam" id="3.40.50.10320:FF:000001">
    <property type="entry name" value="Mycothiol S-conjugate amidase"/>
    <property type="match status" value="1"/>
</dbReference>
<dbReference type="Gene3D" id="3.40.50.10320">
    <property type="entry name" value="LmbE-like"/>
    <property type="match status" value="1"/>
</dbReference>
<dbReference type="HAMAP" id="MF_01482">
    <property type="entry name" value="Mca"/>
    <property type="match status" value="1"/>
</dbReference>
<dbReference type="InterPro" id="IPR003737">
    <property type="entry name" value="GlcNAc_PI_deacetylase-related"/>
</dbReference>
<dbReference type="InterPro" id="IPR024078">
    <property type="entry name" value="LmbE-like_dom_sf"/>
</dbReference>
<dbReference type="InterPro" id="IPR017811">
    <property type="entry name" value="Mca"/>
</dbReference>
<dbReference type="NCBIfam" id="TIGR03446">
    <property type="entry name" value="mycothiol_Mca"/>
    <property type="match status" value="1"/>
</dbReference>
<dbReference type="PANTHER" id="PTHR12993:SF11">
    <property type="entry name" value="N-ACETYLGLUCOSAMINYL-PHOSPHATIDYLINOSITOL DE-N-ACETYLASE"/>
    <property type="match status" value="1"/>
</dbReference>
<dbReference type="PANTHER" id="PTHR12993">
    <property type="entry name" value="N-ACETYLGLUCOSAMINYL-PHOSPHATIDYLINOSITOL DE-N-ACETYLASE-RELATED"/>
    <property type="match status" value="1"/>
</dbReference>
<dbReference type="Pfam" id="PF02585">
    <property type="entry name" value="PIG-L"/>
    <property type="match status" value="1"/>
</dbReference>
<dbReference type="SUPFAM" id="SSF102588">
    <property type="entry name" value="LmbE-like"/>
    <property type="match status" value="1"/>
</dbReference>
<sequence>MSELRLMAVHAHPDDESSKGAATLARYADEGHRVLVVTLTGGERGEILNPAMDLPDVHGRIAEIRRDEMTKAAEILGVEHTWLGFVDSGLPKGDLPPPLPDDCFARVPLEVSTEALVRVVREFRPHVMTTYDENGGYPHPDHIRCHQVSVAAYEAAGDFCRFPDAGEPWTVSKLYYVHGFLRERMQMLQDEFARHGQRGPFEQWLAYWDPDHDFLTSRVTTRVECSKYFSQRDDALRAHATQIDPNAEFFAAPLAWQERLWPTEEFELARSRIPARPPETELFAGIEP</sequence>
<accession>P9WJN1</accession>
<accession>L7N5N8</accession>
<reference key="1">
    <citation type="journal article" date="1998" name="Nature">
        <title>Deciphering the biology of Mycobacterium tuberculosis from the complete genome sequence.</title>
        <authorList>
            <person name="Cole S.T."/>
            <person name="Brosch R."/>
            <person name="Parkhill J."/>
            <person name="Garnier T."/>
            <person name="Churcher C.M."/>
            <person name="Harris D.E."/>
            <person name="Gordon S.V."/>
            <person name="Eiglmeier K."/>
            <person name="Gas S."/>
            <person name="Barry C.E. III"/>
            <person name="Tekaia F."/>
            <person name="Badcock K."/>
            <person name="Basham D."/>
            <person name="Brown D."/>
            <person name="Chillingworth T."/>
            <person name="Connor R."/>
            <person name="Davies R.M."/>
            <person name="Devlin K."/>
            <person name="Feltwell T."/>
            <person name="Gentles S."/>
            <person name="Hamlin N."/>
            <person name="Holroyd S."/>
            <person name="Hornsby T."/>
            <person name="Jagels K."/>
            <person name="Krogh A."/>
            <person name="McLean J."/>
            <person name="Moule S."/>
            <person name="Murphy L.D."/>
            <person name="Oliver S."/>
            <person name="Osborne J."/>
            <person name="Quail M.A."/>
            <person name="Rajandream M.A."/>
            <person name="Rogers J."/>
            <person name="Rutter S."/>
            <person name="Seeger K."/>
            <person name="Skelton S."/>
            <person name="Squares S."/>
            <person name="Squares R."/>
            <person name="Sulston J.E."/>
            <person name="Taylor K."/>
            <person name="Whitehead S."/>
            <person name="Barrell B.G."/>
        </authorList>
    </citation>
    <scope>NUCLEOTIDE SEQUENCE [LARGE SCALE GENOMIC DNA]</scope>
    <source>
        <strain>ATCC 25618 / H37Rv</strain>
    </source>
</reference>
<reference key="2">
    <citation type="journal article" date="2000" name="Biochemistry">
        <title>A novel mycothiol-dependent detoxification pathway in mycobacteria involving mycothiol S-conjugate amidase.</title>
        <authorList>
            <person name="Newton G.L."/>
            <person name="Av-Gay Y."/>
            <person name="Fahey R.C."/>
        </authorList>
    </citation>
    <scope>FUNCTION</scope>
    <scope>CATALYTIC ACTIVITY</scope>
    <source>
        <strain>ATCC 25618 / H37Rv</strain>
    </source>
</reference>
<reference key="3">
    <citation type="journal article" date="2003" name="Biochemistry">
        <title>Characterization of Mycobacterium tuberculosis mycothiol S-conjugate amidase.</title>
        <authorList>
            <person name="Steffek M."/>
            <person name="Newton G.L."/>
            <person name="Av-Gay Y."/>
            <person name="Fahey R.C."/>
        </authorList>
    </citation>
    <scope>FUNCTION</scope>
    <scope>CATALYTIC ACTIVITY</scope>
    <scope>COFACTOR</scope>
    <scope>ACTIVITY REGULATION</scope>
    <scope>BIOPHYSICOCHEMICAL PROPERTIES</scope>
    <source>
        <strain>ATCC 25618 / H37Rv</strain>
    </source>
</reference>
<reference key="4">
    <citation type="journal article" date="2007" name="J. Med. Chem.">
        <title>Synthesis of natural product-inspired inhibitors of Mycobacterium tuberculosis mycothiol-associated enzymes: the first inhibitors of GlcNAc-Ins deacetylase.</title>
        <authorList>
            <person name="Metaferia B.B."/>
            <person name="Fetterolf B.J."/>
            <person name="Shazad-Ul-Hussan S."/>
            <person name="Moravec M."/>
            <person name="Smith J.A."/>
            <person name="Ray S."/>
            <person name="Gutierrez-Lugo M.T."/>
            <person name="Bewley C.A."/>
        </authorList>
    </citation>
    <scope>ACTIVITY REGULATION</scope>
    <scope>BIOTECHNOLOGY</scope>
</reference>
<reference key="5">
    <citation type="journal article" date="2011" name="Mol. Cell. Proteomics">
        <title>Proteogenomic analysis of Mycobacterium tuberculosis by high resolution mass spectrometry.</title>
        <authorList>
            <person name="Kelkar D.S."/>
            <person name="Kumar D."/>
            <person name="Kumar P."/>
            <person name="Balakrishnan L."/>
            <person name="Muthusamy B."/>
            <person name="Yadav A.K."/>
            <person name="Shrivastava P."/>
            <person name="Marimuthu A."/>
            <person name="Anand S."/>
            <person name="Sundaram H."/>
            <person name="Kingsbury R."/>
            <person name="Harsha H.C."/>
            <person name="Nair B."/>
            <person name="Prasad T.S."/>
            <person name="Chauhan D.S."/>
            <person name="Katoch K."/>
            <person name="Katoch V.M."/>
            <person name="Kumar P."/>
            <person name="Chaerkady R."/>
            <person name="Ramachandran S."/>
            <person name="Dash D."/>
            <person name="Pandey A."/>
        </authorList>
    </citation>
    <scope>IDENTIFICATION BY MASS SPECTROMETRY [LARGE SCALE ANALYSIS]</scope>
    <source>
        <strain>ATCC 25618 / H37Rv</strain>
    </source>
</reference>
<proteinExistence type="evidence at protein level"/>
<feature type="chain" id="PRO_0000423187" description="Mycothiol S-conjugate amidase">
    <location>
        <begin position="1"/>
        <end position="288"/>
    </location>
</feature>
<feature type="binding site" evidence="1">
    <location>
        <position position="12"/>
    </location>
    <ligand>
        <name>Zn(2+)</name>
        <dbReference type="ChEBI" id="CHEBI:29105"/>
    </ligand>
</feature>
<feature type="binding site" evidence="1">
    <location>
        <position position="15"/>
    </location>
    <ligand>
        <name>Zn(2+)</name>
        <dbReference type="ChEBI" id="CHEBI:29105"/>
    </ligand>
</feature>
<feature type="binding site" evidence="1">
    <location>
        <position position="142"/>
    </location>
    <ligand>
        <name>Zn(2+)</name>
        <dbReference type="ChEBI" id="CHEBI:29105"/>
    </ligand>
</feature>
<evidence type="ECO:0000255" key="1">
    <source>
        <dbReference type="HAMAP-Rule" id="MF_01482"/>
    </source>
</evidence>
<evidence type="ECO:0000269" key="2">
    <source>
    </source>
</evidence>
<evidence type="ECO:0000269" key="3">
    <source>
    </source>
</evidence>
<evidence type="ECO:0000269" key="4">
    <source>
    </source>
</evidence>
<keyword id="KW-0378">Hydrolase</keyword>
<keyword id="KW-0479">Metal-binding</keyword>
<keyword id="KW-1185">Reference proteome</keyword>
<keyword id="KW-0862">Zinc</keyword>
<name>MCA_MYCTU</name>